<keyword id="KW-0067">ATP-binding</keyword>
<keyword id="KW-1003">Cell membrane</keyword>
<keyword id="KW-0418">Kinase</keyword>
<keyword id="KW-0472">Membrane</keyword>
<keyword id="KW-0547">Nucleotide-binding</keyword>
<keyword id="KW-0597">Phosphoprotein</keyword>
<keyword id="KW-1185">Reference proteome</keyword>
<keyword id="KW-0808">Transferase</keyword>
<keyword id="KW-0812">Transmembrane</keyword>
<keyword id="KW-1133">Transmembrane helix</keyword>
<keyword id="KW-0902">Two-component regulatory system</keyword>
<sequence>MGITAATEMALRRHLVAQLDNQLGGTSYRSVLMYPEKMPRPPWRHETHNYIRSGPGPRFLDAPGQPAGMVAAVVSDGTTVAAGYLTGSGSRAALTSTGRSQLERIAGSRTPLTLDLDGLGRYRVLAAPSRNGHDVIVTGLSMGNVDATMLQMLIIFGIVTVIALVAATTAGIVIIKRALAPLRRVAQTASEVVDLPLDRGEVKLPVRVPEPDANPSTEVGQLGSALNRMLDHIAAALSARQASETCVRQFVADASHELRTPLAAIRGYTELTQRIGDDPEAVAHAMSRVASETERITRLVEDLLLLARLDSGRPLERGPVDMSRLAVDAVSDAHVAGPDHQWALDLPPEPVVIPGDAARLHQVVTNLLANARVHTGPGTIVTTRLSTGPTHVVLQVIDNGPGIPAALQSEVFERFARGDTSRSRQAGSTGLGLAIVSAVVKAHNGTITVSSSPGYTEFAVRLPLDGWQPLESSPR</sequence>
<gene>
    <name type="primary">tcrY</name>
    <name type="ordered locus">Rv3764c</name>
</gene>
<comment type="function">
    <text evidence="4 5">Member of the two-component regulatory system TcrY/TcrX. Activates TcrX by phosphorylation.</text>
</comment>
<comment type="catalytic activity">
    <reaction>
        <text>ATP + protein L-histidine = ADP + protein N-phospho-L-histidine.</text>
        <dbReference type="EC" id="2.7.13.3"/>
    </reaction>
</comment>
<comment type="cofactor">
    <cofactor evidence="5">
        <name>a divalent metal cation</name>
        <dbReference type="ChEBI" id="CHEBI:60240"/>
    </cofactor>
</comment>
<comment type="biophysicochemical properties">
    <kinetics>
        <KM evidence="5">10 mM for ATP</KM>
    </kinetics>
</comment>
<comment type="subunit">
    <text evidence="5">Homodimer.</text>
</comment>
<comment type="subcellular location">
    <subcellularLocation>
        <location evidence="6">Cell membrane</location>
        <topology evidence="6">Single-pass membrane protein</topology>
    </subcellularLocation>
</comment>
<comment type="PTM">
    <text>Autophosphorylated.</text>
</comment>
<comment type="disruption phenotype">
    <text evidence="4">Cells lacking TcrX and TcrY show an increase in virulence in mouse model of infection, with significantly shorter survival times.</text>
</comment>
<feature type="chain" id="PRO_0000412200" description="Probable sensor histidine kinase TcrY">
    <location>
        <begin position="1"/>
        <end position="475"/>
    </location>
</feature>
<feature type="topological domain" description="Extracellular" evidence="1">
    <location>
        <begin position="1"/>
        <end position="153"/>
    </location>
</feature>
<feature type="transmembrane region" description="Helical" evidence="1">
    <location>
        <begin position="154"/>
        <end position="174"/>
    </location>
</feature>
<feature type="topological domain" description="Cytoplasmic" evidence="1">
    <location>
        <begin position="175"/>
        <end position="475"/>
    </location>
</feature>
<feature type="domain" description="HAMP" evidence="2">
    <location>
        <begin position="176"/>
        <end position="238"/>
    </location>
</feature>
<feature type="domain" description="Histidine kinase" evidence="3">
    <location>
        <begin position="253"/>
        <end position="466"/>
    </location>
</feature>
<feature type="modified residue" description="Phosphohistidine; by autocatalysis" evidence="3">
    <location>
        <position position="256"/>
    </location>
</feature>
<evidence type="ECO:0000255" key="1"/>
<evidence type="ECO:0000255" key="2">
    <source>
        <dbReference type="PROSITE-ProRule" id="PRU00102"/>
    </source>
</evidence>
<evidence type="ECO:0000255" key="3">
    <source>
        <dbReference type="PROSITE-ProRule" id="PRU00107"/>
    </source>
</evidence>
<evidence type="ECO:0000269" key="4">
    <source>
    </source>
</evidence>
<evidence type="ECO:0000269" key="5">
    <source>
    </source>
</evidence>
<evidence type="ECO:0000305" key="6"/>
<organism>
    <name type="scientific">Mycobacterium tuberculosis (strain ATCC 25618 / H37Rv)</name>
    <dbReference type="NCBI Taxonomy" id="83332"/>
    <lineage>
        <taxon>Bacteria</taxon>
        <taxon>Bacillati</taxon>
        <taxon>Actinomycetota</taxon>
        <taxon>Actinomycetes</taxon>
        <taxon>Mycobacteriales</taxon>
        <taxon>Mycobacteriaceae</taxon>
        <taxon>Mycobacterium</taxon>
        <taxon>Mycobacterium tuberculosis complex</taxon>
    </lineage>
</organism>
<name>TCRY_MYCTU</name>
<proteinExistence type="evidence at protein level"/>
<accession>O69729</accession>
<accession>L0TGH0</accession>
<dbReference type="EC" id="2.7.13.3"/>
<dbReference type="EMBL" id="AL123456">
    <property type="protein sequence ID" value="CCP46591.1"/>
    <property type="molecule type" value="Genomic_DNA"/>
</dbReference>
<dbReference type="PIR" id="E70801">
    <property type="entry name" value="E70801"/>
</dbReference>
<dbReference type="RefSeq" id="NP_218281.1">
    <property type="nucleotide sequence ID" value="NC_000962.3"/>
</dbReference>
<dbReference type="RefSeq" id="WP_010886181.1">
    <property type="nucleotide sequence ID" value="NC_000962.3"/>
</dbReference>
<dbReference type="SMR" id="O69729"/>
<dbReference type="FunCoup" id="O69729">
    <property type="interactions" value="11"/>
</dbReference>
<dbReference type="STRING" id="83332.Rv3764c"/>
<dbReference type="PaxDb" id="83332-Rv3764c"/>
<dbReference type="DNASU" id="886094"/>
<dbReference type="GeneID" id="886094"/>
<dbReference type="KEGG" id="mtu:Rv3764c"/>
<dbReference type="KEGG" id="mtv:RVBD_3764c"/>
<dbReference type="PATRIC" id="fig|83332.111.peg.4186"/>
<dbReference type="TubercuList" id="Rv3764c"/>
<dbReference type="eggNOG" id="COG2205">
    <property type="taxonomic scope" value="Bacteria"/>
</dbReference>
<dbReference type="InParanoid" id="O69729"/>
<dbReference type="OrthoDB" id="9786919at2"/>
<dbReference type="PhylomeDB" id="O69729"/>
<dbReference type="SABIO-RK" id="O69729"/>
<dbReference type="PHI-base" id="PHI:3616"/>
<dbReference type="Proteomes" id="UP000001584">
    <property type="component" value="Chromosome"/>
</dbReference>
<dbReference type="GO" id="GO:0005829">
    <property type="term" value="C:cytosol"/>
    <property type="evidence" value="ECO:0007005"/>
    <property type="project" value="MTBBASE"/>
</dbReference>
<dbReference type="GO" id="GO:0005886">
    <property type="term" value="C:plasma membrane"/>
    <property type="evidence" value="ECO:0007005"/>
    <property type="project" value="MTBBASE"/>
</dbReference>
<dbReference type="GO" id="GO:0005524">
    <property type="term" value="F:ATP binding"/>
    <property type="evidence" value="ECO:0007669"/>
    <property type="project" value="UniProtKB-KW"/>
</dbReference>
<dbReference type="GO" id="GO:0005509">
    <property type="term" value="F:calcium ion binding"/>
    <property type="evidence" value="ECO:0000314"/>
    <property type="project" value="MTBBASE"/>
</dbReference>
<dbReference type="GO" id="GO:0000287">
    <property type="term" value="F:magnesium ion binding"/>
    <property type="evidence" value="ECO:0000314"/>
    <property type="project" value="MTBBASE"/>
</dbReference>
<dbReference type="GO" id="GO:0000155">
    <property type="term" value="F:phosphorelay sensor kinase activity"/>
    <property type="evidence" value="ECO:0000314"/>
    <property type="project" value="UniProtKB"/>
</dbReference>
<dbReference type="GO" id="GO:0042803">
    <property type="term" value="F:protein homodimerization activity"/>
    <property type="evidence" value="ECO:0000353"/>
    <property type="project" value="MTBBASE"/>
</dbReference>
<dbReference type="GO" id="GO:0000160">
    <property type="term" value="P:phosphorelay signal transduction system"/>
    <property type="evidence" value="ECO:0000314"/>
    <property type="project" value="UniProtKB"/>
</dbReference>
<dbReference type="CDD" id="cd06225">
    <property type="entry name" value="HAMP"/>
    <property type="match status" value="1"/>
</dbReference>
<dbReference type="CDD" id="cd00075">
    <property type="entry name" value="HATPase"/>
    <property type="match status" value="1"/>
</dbReference>
<dbReference type="CDD" id="cd00082">
    <property type="entry name" value="HisKA"/>
    <property type="match status" value="1"/>
</dbReference>
<dbReference type="FunFam" id="3.30.565.10:FF:000006">
    <property type="entry name" value="Sensor histidine kinase WalK"/>
    <property type="match status" value="1"/>
</dbReference>
<dbReference type="FunFam" id="1.10.287.130:FF:000001">
    <property type="entry name" value="Two-component sensor histidine kinase"/>
    <property type="match status" value="1"/>
</dbReference>
<dbReference type="Gene3D" id="1.10.287.130">
    <property type="match status" value="1"/>
</dbReference>
<dbReference type="Gene3D" id="6.10.340.10">
    <property type="match status" value="1"/>
</dbReference>
<dbReference type="Gene3D" id="3.30.565.10">
    <property type="entry name" value="Histidine kinase-like ATPase, C-terminal domain"/>
    <property type="match status" value="1"/>
</dbReference>
<dbReference type="InterPro" id="IPR003660">
    <property type="entry name" value="HAMP_dom"/>
</dbReference>
<dbReference type="InterPro" id="IPR036890">
    <property type="entry name" value="HATPase_C_sf"/>
</dbReference>
<dbReference type="InterPro" id="IPR005467">
    <property type="entry name" value="His_kinase_dom"/>
</dbReference>
<dbReference type="InterPro" id="IPR003661">
    <property type="entry name" value="HisK_dim/P_dom"/>
</dbReference>
<dbReference type="InterPro" id="IPR036097">
    <property type="entry name" value="HisK_dim/P_sf"/>
</dbReference>
<dbReference type="InterPro" id="IPR004358">
    <property type="entry name" value="Sig_transdc_His_kin-like_C"/>
</dbReference>
<dbReference type="InterPro" id="IPR050428">
    <property type="entry name" value="TCS_sensor_his_kinase"/>
</dbReference>
<dbReference type="PANTHER" id="PTHR45436:SF5">
    <property type="entry name" value="SENSOR HISTIDINE KINASE TRCS"/>
    <property type="match status" value="1"/>
</dbReference>
<dbReference type="PANTHER" id="PTHR45436">
    <property type="entry name" value="SENSOR HISTIDINE KINASE YKOH"/>
    <property type="match status" value="1"/>
</dbReference>
<dbReference type="Pfam" id="PF00672">
    <property type="entry name" value="HAMP"/>
    <property type="match status" value="1"/>
</dbReference>
<dbReference type="Pfam" id="PF02518">
    <property type="entry name" value="HATPase_c"/>
    <property type="match status" value="1"/>
</dbReference>
<dbReference type="Pfam" id="PF00512">
    <property type="entry name" value="HisKA"/>
    <property type="match status" value="1"/>
</dbReference>
<dbReference type="PRINTS" id="PR00344">
    <property type="entry name" value="BCTRLSENSOR"/>
</dbReference>
<dbReference type="SMART" id="SM00304">
    <property type="entry name" value="HAMP"/>
    <property type="match status" value="1"/>
</dbReference>
<dbReference type="SMART" id="SM00387">
    <property type="entry name" value="HATPase_c"/>
    <property type="match status" value="1"/>
</dbReference>
<dbReference type="SMART" id="SM00388">
    <property type="entry name" value="HisKA"/>
    <property type="match status" value="1"/>
</dbReference>
<dbReference type="SUPFAM" id="SSF55874">
    <property type="entry name" value="ATPase domain of HSP90 chaperone/DNA topoisomerase II/histidine kinase"/>
    <property type="match status" value="1"/>
</dbReference>
<dbReference type="SUPFAM" id="SSF47384">
    <property type="entry name" value="Homodimeric domain of signal transducing histidine kinase"/>
    <property type="match status" value="1"/>
</dbReference>
<dbReference type="PROSITE" id="PS50885">
    <property type="entry name" value="HAMP"/>
    <property type="match status" value="1"/>
</dbReference>
<dbReference type="PROSITE" id="PS50109">
    <property type="entry name" value="HIS_KIN"/>
    <property type="match status" value="1"/>
</dbReference>
<protein>
    <recommendedName>
        <fullName>Probable sensor histidine kinase TcrY</fullName>
        <ecNumber>2.7.13.3</ecNumber>
    </recommendedName>
</protein>
<reference key="1">
    <citation type="journal article" date="1998" name="Nature">
        <title>Deciphering the biology of Mycobacterium tuberculosis from the complete genome sequence.</title>
        <authorList>
            <person name="Cole S.T."/>
            <person name="Brosch R."/>
            <person name="Parkhill J."/>
            <person name="Garnier T."/>
            <person name="Churcher C.M."/>
            <person name="Harris D.E."/>
            <person name="Gordon S.V."/>
            <person name="Eiglmeier K."/>
            <person name="Gas S."/>
            <person name="Barry C.E. III"/>
            <person name="Tekaia F."/>
            <person name="Badcock K."/>
            <person name="Basham D."/>
            <person name="Brown D."/>
            <person name="Chillingworth T."/>
            <person name="Connor R."/>
            <person name="Davies R.M."/>
            <person name="Devlin K."/>
            <person name="Feltwell T."/>
            <person name="Gentles S."/>
            <person name="Hamlin N."/>
            <person name="Holroyd S."/>
            <person name="Hornsby T."/>
            <person name="Jagels K."/>
            <person name="Krogh A."/>
            <person name="McLean J."/>
            <person name="Moule S."/>
            <person name="Murphy L.D."/>
            <person name="Oliver S."/>
            <person name="Osborne J."/>
            <person name="Quail M.A."/>
            <person name="Rajandream M.A."/>
            <person name="Rogers J."/>
            <person name="Rutter S."/>
            <person name="Seeger K."/>
            <person name="Skelton S."/>
            <person name="Squares S."/>
            <person name="Squares R."/>
            <person name="Sulston J.E."/>
            <person name="Taylor K."/>
            <person name="Whitehead S."/>
            <person name="Barrell B.G."/>
        </authorList>
    </citation>
    <scope>NUCLEOTIDE SEQUENCE [LARGE SCALE GENOMIC DNA]</scope>
    <source>
        <strain>ATCC 25618 / H37Rv</strain>
    </source>
</reference>
<reference key="2">
    <citation type="journal article" date="2003" name="Infect. Immun.">
        <title>Deletion of two-component regulatory systems increases the virulence of Mycobacterium tuberculosis.</title>
        <authorList>
            <person name="Parish T."/>
            <person name="Smith D.A."/>
            <person name="Kendall S."/>
            <person name="Casali N."/>
            <person name="Bancroft G.J."/>
            <person name="Stoker N.G."/>
        </authorList>
    </citation>
    <scope>FUNCTION</scope>
    <scope>DISRUPTION PHENOTYPE</scope>
    <scope>GENE NAME</scope>
    <source>
        <strain>ATCC 25618 / H37Rv</strain>
    </source>
</reference>
<reference key="3">
    <citation type="journal article" date="2010" name="Biochimie">
        <title>Interaction analysis of TcrX/Y two component system from Mycobacterium tuberculosis.</title>
        <authorList>
            <person name="Bhattacharya M."/>
            <person name="Biswas A."/>
            <person name="Das A.K."/>
        </authorList>
    </citation>
    <scope>FUNCTION</scope>
    <scope>COFACTOR</scope>
    <scope>BIOPHYSICOCHEMICAL PROPERTIES</scope>
    <scope>SUBUNIT</scope>
    <scope>AUTOPHOSPHORYLATION</scope>
    <source>
        <strain>ATCC 25618 / H37Rv</strain>
    </source>
</reference>
<reference key="4">
    <citation type="journal article" date="2011" name="Mol. Cell. Proteomics">
        <title>Proteogenomic analysis of Mycobacterium tuberculosis by high resolution mass spectrometry.</title>
        <authorList>
            <person name="Kelkar D.S."/>
            <person name="Kumar D."/>
            <person name="Kumar P."/>
            <person name="Balakrishnan L."/>
            <person name="Muthusamy B."/>
            <person name="Yadav A.K."/>
            <person name="Shrivastava P."/>
            <person name="Marimuthu A."/>
            <person name="Anand S."/>
            <person name="Sundaram H."/>
            <person name="Kingsbury R."/>
            <person name="Harsha H.C."/>
            <person name="Nair B."/>
            <person name="Prasad T.S."/>
            <person name="Chauhan D.S."/>
            <person name="Katoch K."/>
            <person name="Katoch V.M."/>
            <person name="Kumar P."/>
            <person name="Chaerkady R."/>
            <person name="Ramachandran S."/>
            <person name="Dash D."/>
            <person name="Pandey A."/>
        </authorList>
    </citation>
    <scope>IDENTIFICATION BY MASS SPECTROMETRY [LARGE SCALE ANALYSIS]</scope>
    <source>
        <strain>ATCC 25618 / H37Rv</strain>
    </source>
</reference>